<evidence type="ECO:0000255" key="1">
    <source>
        <dbReference type="HAMAP-Rule" id="MF_00193"/>
    </source>
</evidence>
<sequence length="275" mass="30474">MTLQQEIIQALGAKPHINPEEEIRRSVDFLKAYLKTYPFLKSLVLGISGGQDSTLAGKLSQMAIAELREETGDNALQFIAVRLPYGVQADEQDCQDAIAFIQPDRVLTVNIKGAVLASEQALREAGIELSDFVRGNEKARERMKAQYSIAGMTHGVVVGTDHAAEAITGFFTKYGDGGTDINPLHRLNKRQGKQLLAALGCPEHLYKKVPTADLEDDRPSLPDEAALGVTYDNIDDYLEGKTLDSAIAKTIEGWYVKTEHKRRLPITVFDDFWKR</sequence>
<reference key="1">
    <citation type="journal article" date="2004" name="Nat. Genet.">
        <title>Comparison of genome degradation in Paratyphi A and Typhi, human-restricted serovars of Salmonella enterica that cause typhoid.</title>
        <authorList>
            <person name="McClelland M."/>
            <person name="Sanderson K.E."/>
            <person name="Clifton S.W."/>
            <person name="Latreille P."/>
            <person name="Porwollik S."/>
            <person name="Sabo A."/>
            <person name="Meyer R."/>
            <person name="Bieri T."/>
            <person name="Ozersky P."/>
            <person name="McLellan M."/>
            <person name="Harkins C.R."/>
            <person name="Wang C."/>
            <person name="Nguyen C."/>
            <person name="Berghoff A."/>
            <person name="Elliott G."/>
            <person name="Kohlberg S."/>
            <person name="Strong C."/>
            <person name="Du F."/>
            <person name="Carter J."/>
            <person name="Kremizki C."/>
            <person name="Layman D."/>
            <person name="Leonard S."/>
            <person name="Sun H."/>
            <person name="Fulton L."/>
            <person name="Nash W."/>
            <person name="Miner T."/>
            <person name="Minx P."/>
            <person name="Delehaunty K."/>
            <person name="Fronick C."/>
            <person name="Magrini V."/>
            <person name="Nhan M."/>
            <person name="Warren W."/>
            <person name="Florea L."/>
            <person name="Spieth J."/>
            <person name="Wilson R.K."/>
        </authorList>
    </citation>
    <scope>NUCLEOTIDE SEQUENCE [LARGE SCALE GENOMIC DNA]</scope>
    <source>
        <strain>ATCC 9150 / SARB42</strain>
    </source>
</reference>
<organism>
    <name type="scientific">Salmonella paratyphi A (strain ATCC 9150 / SARB42)</name>
    <dbReference type="NCBI Taxonomy" id="295319"/>
    <lineage>
        <taxon>Bacteria</taxon>
        <taxon>Pseudomonadati</taxon>
        <taxon>Pseudomonadota</taxon>
        <taxon>Gammaproteobacteria</taxon>
        <taxon>Enterobacterales</taxon>
        <taxon>Enterobacteriaceae</taxon>
        <taxon>Salmonella</taxon>
    </lineage>
</organism>
<dbReference type="EC" id="6.3.1.5" evidence="1"/>
<dbReference type="EMBL" id="CP000026">
    <property type="protein sequence ID" value="AAV77467.1"/>
    <property type="molecule type" value="Genomic_DNA"/>
</dbReference>
<dbReference type="RefSeq" id="WP_000174983.1">
    <property type="nucleotide sequence ID" value="NC_006511.1"/>
</dbReference>
<dbReference type="SMR" id="Q5PHB6"/>
<dbReference type="KEGG" id="spt:SPA1534"/>
<dbReference type="HOGENOM" id="CLU_059327_3_0_6"/>
<dbReference type="UniPathway" id="UPA00253">
    <property type="reaction ID" value="UER00333"/>
</dbReference>
<dbReference type="Proteomes" id="UP000008185">
    <property type="component" value="Chromosome"/>
</dbReference>
<dbReference type="GO" id="GO:0005737">
    <property type="term" value="C:cytoplasm"/>
    <property type="evidence" value="ECO:0007669"/>
    <property type="project" value="InterPro"/>
</dbReference>
<dbReference type="GO" id="GO:0005524">
    <property type="term" value="F:ATP binding"/>
    <property type="evidence" value="ECO:0007669"/>
    <property type="project" value="UniProtKB-UniRule"/>
</dbReference>
<dbReference type="GO" id="GO:0004359">
    <property type="term" value="F:glutaminase activity"/>
    <property type="evidence" value="ECO:0007669"/>
    <property type="project" value="InterPro"/>
</dbReference>
<dbReference type="GO" id="GO:0046872">
    <property type="term" value="F:metal ion binding"/>
    <property type="evidence" value="ECO:0007669"/>
    <property type="project" value="UniProtKB-KW"/>
</dbReference>
<dbReference type="GO" id="GO:0003952">
    <property type="term" value="F:NAD+ synthase (glutamine-hydrolyzing) activity"/>
    <property type="evidence" value="ECO:0007669"/>
    <property type="project" value="InterPro"/>
</dbReference>
<dbReference type="GO" id="GO:0008795">
    <property type="term" value="F:NAD+ synthase activity"/>
    <property type="evidence" value="ECO:0007669"/>
    <property type="project" value="UniProtKB-UniRule"/>
</dbReference>
<dbReference type="GO" id="GO:0009435">
    <property type="term" value="P:NAD biosynthetic process"/>
    <property type="evidence" value="ECO:0007669"/>
    <property type="project" value="UniProtKB-UniRule"/>
</dbReference>
<dbReference type="CDD" id="cd00553">
    <property type="entry name" value="NAD_synthase"/>
    <property type="match status" value="1"/>
</dbReference>
<dbReference type="FunFam" id="3.40.50.620:FF:000015">
    <property type="entry name" value="NH(3)-dependent NAD(+) synthetase"/>
    <property type="match status" value="1"/>
</dbReference>
<dbReference type="Gene3D" id="3.40.50.620">
    <property type="entry name" value="HUPs"/>
    <property type="match status" value="1"/>
</dbReference>
<dbReference type="HAMAP" id="MF_00193">
    <property type="entry name" value="NadE_ammonia_dep"/>
    <property type="match status" value="1"/>
</dbReference>
<dbReference type="InterPro" id="IPR022310">
    <property type="entry name" value="NAD/GMP_synthase"/>
</dbReference>
<dbReference type="InterPro" id="IPR003694">
    <property type="entry name" value="NAD_synthase"/>
</dbReference>
<dbReference type="InterPro" id="IPR022926">
    <property type="entry name" value="NH(3)-dep_NAD(+)_synth"/>
</dbReference>
<dbReference type="InterPro" id="IPR014729">
    <property type="entry name" value="Rossmann-like_a/b/a_fold"/>
</dbReference>
<dbReference type="NCBIfam" id="TIGR00552">
    <property type="entry name" value="nadE"/>
    <property type="match status" value="1"/>
</dbReference>
<dbReference type="NCBIfam" id="NF001979">
    <property type="entry name" value="PRK00768.1"/>
    <property type="match status" value="1"/>
</dbReference>
<dbReference type="PANTHER" id="PTHR23090">
    <property type="entry name" value="NH 3 /GLUTAMINE-DEPENDENT NAD + SYNTHETASE"/>
    <property type="match status" value="1"/>
</dbReference>
<dbReference type="PANTHER" id="PTHR23090:SF7">
    <property type="entry name" value="NH(3)-DEPENDENT NAD(+) SYNTHETASE"/>
    <property type="match status" value="1"/>
</dbReference>
<dbReference type="Pfam" id="PF02540">
    <property type="entry name" value="NAD_synthase"/>
    <property type="match status" value="1"/>
</dbReference>
<dbReference type="SUPFAM" id="SSF52402">
    <property type="entry name" value="Adenine nucleotide alpha hydrolases-like"/>
    <property type="match status" value="1"/>
</dbReference>
<name>NADE_SALPA</name>
<feature type="chain" id="PRO_1000077595" description="NH(3)-dependent NAD(+) synthetase">
    <location>
        <begin position="1"/>
        <end position="275"/>
    </location>
</feature>
<feature type="binding site" evidence="1">
    <location>
        <begin position="46"/>
        <end position="53"/>
    </location>
    <ligand>
        <name>ATP</name>
        <dbReference type="ChEBI" id="CHEBI:30616"/>
    </ligand>
</feature>
<feature type="binding site" evidence="1">
    <location>
        <position position="52"/>
    </location>
    <ligand>
        <name>Mg(2+)</name>
        <dbReference type="ChEBI" id="CHEBI:18420"/>
    </ligand>
</feature>
<feature type="binding site" evidence="1">
    <location>
        <position position="140"/>
    </location>
    <ligand>
        <name>deamido-NAD(+)</name>
        <dbReference type="ChEBI" id="CHEBI:58437"/>
    </ligand>
</feature>
<feature type="binding site" evidence="1">
    <location>
        <position position="160"/>
    </location>
    <ligand>
        <name>ATP</name>
        <dbReference type="ChEBI" id="CHEBI:30616"/>
    </ligand>
</feature>
<feature type="binding site" evidence="1">
    <location>
        <position position="165"/>
    </location>
    <ligand>
        <name>Mg(2+)</name>
        <dbReference type="ChEBI" id="CHEBI:18420"/>
    </ligand>
</feature>
<feature type="binding site" evidence="1">
    <location>
        <position position="173"/>
    </location>
    <ligand>
        <name>deamido-NAD(+)</name>
        <dbReference type="ChEBI" id="CHEBI:58437"/>
    </ligand>
</feature>
<feature type="binding site" evidence="1">
    <location>
        <position position="180"/>
    </location>
    <ligand>
        <name>deamido-NAD(+)</name>
        <dbReference type="ChEBI" id="CHEBI:58437"/>
    </ligand>
</feature>
<feature type="binding site" evidence="1">
    <location>
        <position position="189"/>
    </location>
    <ligand>
        <name>ATP</name>
        <dbReference type="ChEBI" id="CHEBI:30616"/>
    </ligand>
</feature>
<feature type="binding site" evidence="1">
    <location>
        <position position="211"/>
    </location>
    <ligand>
        <name>ATP</name>
        <dbReference type="ChEBI" id="CHEBI:30616"/>
    </ligand>
</feature>
<feature type="binding site" evidence="1">
    <location>
        <begin position="260"/>
        <end position="261"/>
    </location>
    <ligand>
        <name>deamido-NAD(+)</name>
        <dbReference type="ChEBI" id="CHEBI:58437"/>
    </ligand>
</feature>
<gene>
    <name evidence="1" type="primary">nadE</name>
    <name type="ordered locus">SPA1534</name>
</gene>
<protein>
    <recommendedName>
        <fullName evidence="1">NH(3)-dependent NAD(+) synthetase</fullName>
        <ecNumber evidence="1">6.3.1.5</ecNumber>
    </recommendedName>
</protein>
<proteinExistence type="inferred from homology"/>
<accession>Q5PHB6</accession>
<comment type="function">
    <text evidence="1">Catalyzes the ATP-dependent amidation of deamido-NAD to form NAD. Uses ammonia as a nitrogen source.</text>
</comment>
<comment type="catalytic activity">
    <reaction evidence="1">
        <text>deamido-NAD(+) + NH4(+) + ATP = AMP + diphosphate + NAD(+) + H(+)</text>
        <dbReference type="Rhea" id="RHEA:21188"/>
        <dbReference type="ChEBI" id="CHEBI:15378"/>
        <dbReference type="ChEBI" id="CHEBI:28938"/>
        <dbReference type="ChEBI" id="CHEBI:30616"/>
        <dbReference type="ChEBI" id="CHEBI:33019"/>
        <dbReference type="ChEBI" id="CHEBI:57540"/>
        <dbReference type="ChEBI" id="CHEBI:58437"/>
        <dbReference type="ChEBI" id="CHEBI:456215"/>
        <dbReference type="EC" id="6.3.1.5"/>
    </reaction>
</comment>
<comment type="pathway">
    <text evidence="1">Cofactor biosynthesis; NAD(+) biosynthesis; NAD(+) from deamido-NAD(+) (ammonia route): step 1/1.</text>
</comment>
<comment type="subunit">
    <text evidence="1">Homodimer.</text>
</comment>
<comment type="similarity">
    <text evidence="1">Belongs to the NAD synthetase family.</text>
</comment>
<keyword id="KW-0067">ATP-binding</keyword>
<keyword id="KW-0436">Ligase</keyword>
<keyword id="KW-0460">Magnesium</keyword>
<keyword id="KW-0479">Metal-binding</keyword>
<keyword id="KW-0520">NAD</keyword>
<keyword id="KW-0547">Nucleotide-binding</keyword>